<dbReference type="EC" id="3.4.24.-"/>
<dbReference type="EMBL" id="AC005315">
    <property type="protein sequence ID" value="AAC33234.1"/>
    <property type="status" value="ALT_INIT"/>
    <property type="molecule type" value="Genomic_DNA"/>
</dbReference>
<dbReference type="EMBL" id="CP002685">
    <property type="protein sequence ID" value="AEC08208.1"/>
    <property type="molecule type" value="Genomic_DNA"/>
</dbReference>
<dbReference type="EMBL" id="BT002743">
    <property type="protein sequence ID" value="AAO22572.1"/>
    <property type="molecule type" value="mRNA"/>
</dbReference>
<dbReference type="EMBL" id="AY063914">
    <property type="protein sequence ID" value="AAL36270.1"/>
    <property type="molecule type" value="mRNA"/>
</dbReference>
<dbReference type="EMBL" id="AK226271">
    <property type="protein sequence ID" value="BAE98430.1"/>
    <property type="molecule type" value="mRNA"/>
</dbReference>
<dbReference type="PIR" id="T02738">
    <property type="entry name" value="T02738"/>
</dbReference>
<dbReference type="RefSeq" id="NP_850129.1">
    <property type="nucleotide sequence ID" value="NM_179798.2"/>
</dbReference>
<dbReference type="SMR" id="Q84WU8"/>
<dbReference type="BioGRID" id="2806">
    <property type="interactions" value="3"/>
</dbReference>
<dbReference type="FunCoup" id="Q84WU8">
    <property type="interactions" value="4506"/>
</dbReference>
<dbReference type="STRING" id="3702.Q84WU8"/>
<dbReference type="MEROPS" id="M41.022"/>
<dbReference type="GlyGen" id="Q84WU8">
    <property type="glycosylation" value="1 site"/>
</dbReference>
<dbReference type="SwissPalm" id="Q84WU8"/>
<dbReference type="PaxDb" id="3702-AT2G29080.1"/>
<dbReference type="ProteomicsDB" id="228919"/>
<dbReference type="EnsemblPlants" id="AT2G29080.1">
    <property type="protein sequence ID" value="AT2G29080.1"/>
    <property type="gene ID" value="AT2G29080"/>
</dbReference>
<dbReference type="GeneID" id="817456"/>
<dbReference type="Gramene" id="AT2G29080.1">
    <property type="protein sequence ID" value="AT2G29080.1"/>
    <property type="gene ID" value="AT2G29080"/>
</dbReference>
<dbReference type="KEGG" id="ath:AT2G29080"/>
<dbReference type="Araport" id="AT2G29080"/>
<dbReference type="TAIR" id="AT2G29080">
    <property type="gene designation" value="FTSH3"/>
</dbReference>
<dbReference type="eggNOG" id="KOG0731">
    <property type="taxonomic scope" value="Eukaryota"/>
</dbReference>
<dbReference type="HOGENOM" id="CLU_000688_23_2_1"/>
<dbReference type="InParanoid" id="Q84WU8"/>
<dbReference type="OMA" id="EFMRFAP"/>
<dbReference type="OrthoDB" id="1413014at2759"/>
<dbReference type="PhylomeDB" id="Q84WU8"/>
<dbReference type="BRENDA" id="3.4.24.B20">
    <property type="organism ID" value="399"/>
</dbReference>
<dbReference type="CD-CODE" id="4299E36E">
    <property type="entry name" value="Nucleolus"/>
</dbReference>
<dbReference type="PRO" id="PR:Q84WU8"/>
<dbReference type="Proteomes" id="UP000006548">
    <property type="component" value="Chromosome 2"/>
</dbReference>
<dbReference type="ExpressionAtlas" id="Q84WU8">
    <property type="expression patterns" value="baseline and differential"/>
</dbReference>
<dbReference type="GO" id="GO:0009535">
    <property type="term" value="C:chloroplast thylakoid membrane"/>
    <property type="evidence" value="ECO:0007005"/>
    <property type="project" value="TAIR"/>
</dbReference>
<dbReference type="GO" id="GO:0005743">
    <property type="term" value="C:mitochondrial inner membrane"/>
    <property type="evidence" value="ECO:0007669"/>
    <property type="project" value="UniProtKB-SubCell"/>
</dbReference>
<dbReference type="GO" id="GO:0005739">
    <property type="term" value="C:mitochondrion"/>
    <property type="evidence" value="ECO:0000314"/>
    <property type="project" value="TAIR"/>
</dbReference>
<dbReference type="GO" id="GO:0005524">
    <property type="term" value="F:ATP binding"/>
    <property type="evidence" value="ECO:0007669"/>
    <property type="project" value="UniProtKB-KW"/>
</dbReference>
<dbReference type="GO" id="GO:0016887">
    <property type="term" value="F:ATP hydrolysis activity"/>
    <property type="evidence" value="ECO:0007669"/>
    <property type="project" value="InterPro"/>
</dbReference>
<dbReference type="GO" id="GO:0004176">
    <property type="term" value="F:ATP-dependent peptidase activity"/>
    <property type="evidence" value="ECO:0000250"/>
    <property type="project" value="TAIR"/>
</dbReference>
<dbReference type="GO" id="GO:0004222">
    <property type="term" value="F:metalloendopeptidase activity"/>
    <property type="evidence" value="ECO:0007669"/>
    <property type="project" value="InterPro"/>
</dbReference>
<dbReference type="GO" id="GO:0008270">
    <property type="term" value="F:zinc ion binding"/>
    <property type="evidence" value="ECO:0007669"/>
    <property type="project" value="InterPro"/>
</dbReference>
<dbReference type="GO" id="GO:0006508">
    <property type="term" value="P:proteolysis"/>
    <property type="evidence" value="ECO:0007669"/>
    <property type="project" value="UniProtKB-KW"/>
</dbReference>
<dbReference type="CDD" id="cd19501">
    <property type="entry name" value="RecA-like_FtsH"/>
    <property type="match status" value="1"/>
</dbReference>
<dbReference type="FunFam" id="1.10.8.60:FF:000019">
    <property type="entry name" value="AFG3-like AAA ATPase 2"/>
    <property type="match status" value="1"/>
</dbReference>
<dbReference type="FunFam" id="3.40.50.300:FF:000001">
    <property type="entry name" value="ATP-dependent zinc metalloprotease FtsH"/>
    <property type="match status" value="1"/>
</dbReference>
<dbReference type="FunFam" id="3.40.1690.20:FF:000004">
    <property type="entry name" value="ATP-dependent zinc metalloprotease FTSH 10 mitochondrial"/>
    <property type="match status" value="1"/>
</dbReference>
<dbReference type="FunFam" id="1.20.58.760:FF:000005">
    <property type="entry name" value="ATP-dependent zinc metalloprotease FTSH 10, mitochondrial"/>
    <property type="match status" value="1"/>
</dbReference>
<dbReference type="Gene3D" id="1.10.8.60">
    <property type="match status" value="1"/>
</dbReference>
<dbReference type="Gene3D" id="3.40.1690.20">
    <property type="match status" value="1"/>
</dbReference>
<dbReference type="Gene3D" id="3.40.50.300">
    <property type="entry name" value="P-loop containing nucleotide triphosphate hydrolases"/>
    <property type="match status" value="1"/>
</dbReference>
<dbReference type="Gene3D" id="1.20.58.760">
    <property type="entry name" value="Peptidase M41"/>
    <property type="match status" value="1"/>
</dbReference>
<dbReference type="HAMAP" id="MF_01458">
    <property type="entry name" value="FtsH"/>
    <property type="match status" value="1"/>
</dbReference>
<dbReference type="InterPro" id="IPR003593">
    <property type="entry name" value="AAA+_ATPase"/>
</dbReference>
<dbReference type="InterPro" id="IPR041569">
    <property type="entry name" value="AAA_lid_3"/>
</dbReference>
<dbReference type="InterPro" id="IPR050928">
    <property type="entry name" value="ATP-dep_Zn_Metalloprotease"/>
</dbReference>
<dbReference type="InterPro" id="IPR003959">
    <property type="entry name" value="ATPase_AAA_core"/>
</dbReference>
<dbReference type="InterPro" id="IPR003960">
    <property type="entry name" value="ATPase_AAA_CS"/>
</dbReference>
<dbReference type="InterPro" id="IPR005936">
    <property type="entry name" value="FtsH"/>
</dbReference>
<dbReference type="InterPro" id="IPR027417">
    <property type="entry name" value="P-loop_NTPase"/>
</dbReference>
<dbReference type="InterPro" id="IPR011546">
    <property type="entry name" value="Pept_M41_FtsH_extracell"/>
</dbReference>
<dbReference type="InterPro" id="IPR000642">
    <property type="entry name" value="Peptidase_M41"/>
</dbReference>
<dbReference type="InterPro" id="IPR037219">
    <property type="entry name" value="Peptidase_M41-like"/>
</dbReference>
<dbReference type="NCBIfam" id="TIGR01241">
    <property type="entry name" value="FtsH_fam"/>
    <property type="match status" value="1"/>
</dbReference>
<dbReference type="PANTHER" id="PTHR43655">
    <property type="entry name" value="ATP-DEPENDENT PROTEASE"/>
    <property type="match status" value="1"/>
</dbReference>
<dbReference type="PANTHER" id="PTHR43655:SF35">
    <property type="entry name" value="ATP-DEPENDENT ZINC METALLOPROTEASE FTSH 3, MITOCHONDRIAL"/>
    <property type="match status" value="1"/>
</dbReference>
<dbReference type="Pfam" id="PF00004">
    <property type="entry name" value="AAA"/>
    <property type="match status" value="1"/>
</dbReference>
<dbReference type="Pfam" id="PF17862">
    <property type="entry name" value="AAA_lid_3"/>
    <property type="match status" value="1"/>
</dbReference>
<dbReference type="Pfam" id="PF06480">
    <property type="entry name" value="FtsH_ext"/>
    <property type="match status" value="1"/>
</dbReference>
<dbReference type="Pfam" id="PF01434">
    <property type="entry name" value="Peptidase_M41"/>
    <property type="match status" value="1"/>
</dbReference>
<dbReference type="SMART" id="SM00382">
    <property type="entry name" value="AAA"/>
    <property type="match status" value="1"/>
</dbReference>
<dbReference type="SUPFAM" id="SSF140990">
    <property type="entry name" value="FtsH protease domain-like"/>
    <property type="match status" value="1"/>
</dbReference>
<dbReference type="SUPFAM" id="SSF52540">
    <property type="entry name" value="P-loop containing nucleoside triphosphate hydrolases"/>
    <property type="match status" value="1"/>
</dbReference>
<dbReference type="PROSITE" id="PS00674">
    <property type="entry name" value="AAA"/>
    <property type="match status" value="1"/>
</dbReference>
<accession>Q84WU8</accession>
<accession>O81076</accession>
<accession>Q0WWR8</accession>
<accession>Q8VZR5</accession>
<protein>
    <recommendedName>
        <fullName>ATP-dependent zinc metalloprotease FTSH 3, mitochondrial</fullName>
        <shortName>AtFTSH3</shortName>
        <ecNumber>3.4.24.-</ecNumber>
    </recommendedName>
</protein>
<comment type="function">
    <text evidence="7">Probable ATP-dependent zinc metallopeptidase. Involved in the assembly and/or stability of the complexes I and V of the mitochondrial oxidative phosphorylation system.</text>
</comment>
<comment type="cofactor">
    <cofactor evidence="1">
        <name>Zn(2+)</name>
        <dbReference type="ChEBI" id="CHEBI:29105"/>
    </cofactor>
    <text evidence="1">Binds 1 zinc ion per subunit.</text>
</comment>
<comment type="subcellular location">
    <subcellularLocation>
        <location evidence="4 5 7">Mitochondrion inner membrane</location>
        <topology evidence="4 5 7">Single-pass membrane protein</topology>
        <orientation evidence="4 5 7">Matrix side</orientation>
    </subcellularLocation>
</comment>
<comment type="induction">
    <text evidence="6">By heat and high light.</text>
</comment>
<comment type="similarity">
    <text evidence="8">In the N-terminal section; belongs to the AAA ATPase family.</text>
</comment>
<comment type="similarity">
    <text evidence="8">In the C-terminal section; belongs to the peptidase M41 family.</text>
</comment>
<comment type="sequence caution" evidence="8">
    <conflict type="erroneous initiation">
        <sequence resource="EMBL-CDS" id="AAC33234"/>
    </conflict>
</comment>
<gene>
    <name type="primary">FTSH3</name>
    <name type="ordered locus">At2g29080</name>
    <name type="ORF">T9I4.16</name>
</gene>
<sequence length="809" mass="89353">MTMIFFSKLNRSISRSKGFLYGGGVRSAARLLTSPGLEAASVNEVEGGLGFIRRHFASLASRKGLVNNDLIGVFANPRLRRFFSDEAPKKKNYENYFPKDKQEPKSDQKSEHKEGSEKNENENVGDMFMNRFQNLLIPLLALAVFFSTFSFGSGEQQQISFQEFKNKLLEPGLVDHIDVSNKSVAKVYVRSTPKDQQTTDVVHGNGNGIPAKRTGGQYKYYFNIGSVDSFEEKLEEAQEALGVDRHEYVPVTYVSEMVWYQEFMRFAPTLLLLGTLIYGARRMQGGLGVGGTGGKNGRGIFNIGKATITRADKHSKNKIYFKDVAGCDEAKQEIMEFVHFLKNPKKYEDLGAKIPKGALLVGPPGTGKTLLAKATAGESGVPFLSISGSDFMEMFVGVGPSRVRHLFQEARQAAPSIIFIDEIDAIGRARGRGGLGGNDERESTLNQLLVEMDGFGTTAGVVVLAGTNRPDILDKALLRPGRFDRQITIDKPDIKGRDQIFKIYLKKIKLDHEPSYYSQRLAALTPGFAGADIANVCNEAALIAARHEGATVTMAHFESAIDRVIGGLEKKNRVISKLERRTVAYHESGHAVVGWFLEHAEPLLKVTIVPRGTAALGFAQYVPNENLLMTKEQLFDMTCMTLGGRAAEQVLIGKISTGAQNDLEKVTKMTYAQVAVYGFSDKVGLLSFPPRDDGYDFSKPYSNKTGAIIDEEVRDWVAKAYERTVELVEEHKVKVAEIAELLLEKEVLHQDDLLKILGERPFKSAEVTNYDRFKSGFEETEKDSAATPTVEPVVDDGAPPPFEPQVVPT</sequence>
<evidence type="ECO:0000250" key="1"/>
<evidence type="ECO:0000255" key="2"/>
<evidence type="ECO:0000256" key="3">
    <source>
        <dbReference type="SAM" id="MobiDB-lite"/>
    </source>
</evidence>
<evidence type="ECO:0000269" key="4">
    <source>
    </source>
</evidence>
<evidence type="ECO:0000269" key="5">
    <source>
    </source>
</evidence>
<evidence type="ECO:0000269" key="6">
    <source>
    </source>
</evidence>
<evidence type="ECO:0000269" key="7">
    <source ref="10"/>
</evidence>
<evidence type="ECO:0000305" key="8"/>
<name>FTSH3_ARATH</name>
<feature type="transit peptide" description="Mitochondrion" evidence="2">
    <location>
        <begin position="1"/>
        <end position="83"/>
    </location>
</feature>
<feature type="chain" id="PRO_0000341329" description="ATP-dependent zinc metalloprotease FTSH 3, mitochondrial">
    <location>
        <begin position="84"/>
        <end position="809"/>
    </location>
</feature>
<feature type="transmembrane region" description="Helical" evidence="2">
    <location>
        <begin position="132"/>
        <end position="152"/>
    </location>
</feature>
<feature type="region of interest" description="Disordered" evidence="3">
    <location>
        <begin position="93"/>
        <end position="122"/>
    </location>
</feature>
<feature type="region of interest" description="Disordered" evidence="3">
    <location>
        <begin position="776"/>
        <end position="809"/>
    </location>
</feature>
<feature type="compositionally biased region" description="Basic and acidic residues" evidence="3">
    <location>
        <begin position="93"/>
        <end position="121"/>
    </location>
</feature>
<feature type="active site" evidence="1">
    <location>
        <position position="587"/>
    </location>
</feature>
<feature type="binding site" evidence="2">
    <location>
        <begin position="362"/>
        <end position="369"/>
    </location>
    <ligand>
        <name>ATP</name>
        <dbReference type="ChEBI" id="CHEBI:30616"/>
    </ligand>
</feature>
<feature type="binding site" evidence="1">
    <location>
        <position position="586"/>
    </location>
    <ligand>
        <name>Zn(2+)</name>
        <dbReference type="ChEBI" id="CHEBI:29105"/>
        <note>catalytic</note>
    </ligand>
</feature>
<feature type="binding site" evidence="1">
    <location>
        <position position="590"/>
    </location>
    <ligand>
        <name>Zn(2+)</name>
        <dbReference type="ChEBI" id="CHEBI:29105"/>
        <note>catalytic</note>
    </ligand>
</feature>
<feature type="binding site" evidence="1">
    <location>
        <position position="662"/>
    </location>
    <ligand>
        <name>Zn(2+)</name>
        <dbReference type="ChEBI" id="CHEBI:29105"/>
        <note>catalytic</note>
    </ligand>
</feature>
<feature type="sequence conflict" description="In Ref. 3; AAL36270." evidence="8" ref="3">
    <original>E</original>
    <variation>D</variation>
    <location>
        <position position="155"/>
    </location>
</feature>
<feature type="sequence conflict" description="In Ref. 4; BAE98430." evidence="8" ref="4">
    <original>T</original>
    <variation>A</variation>
    <location>
        <position position="613"/>
    </location>
</feature>
<feature type="sequence conflict" description="In Ref. 3; AAL36270." evidence="8" ref="3">
    <original>A</original>
    <variation>P</variation>
    <location>
        <position position="647"/>
    </location>
</feature>
<proteinExistence type="evidence at protein level"/>
<reference key="1">
    <citation type="journal article" date="1999" name="Nature">
        <title>Sequence and analysis of chromosome 2 of the plant Arabidopsis thaliana.</title>
        <authorList>
            <person name="Lin X."/>
            <person name="Kaul S."/>
            <person name="Rounsley S.D."/>
            <person name="Shea T.P."/>
            <person name="Benito M.-I."/>
            <person name="Town C.D."/>
            <person name="Fujii C.Y."/>
            <person name="Mason T.M."/>
            <person name="Bowman C.L."/>
            <person name="Barnstead M.E."/>
            <person name="Feldblyum T.V."/>
            <person name="Buell C.R."/>
            <person name="Ketchum K.A."/>
            <person name="Lee J.J."/>
            <person name="Ronning C.M."/>
            <person name="Koo H.L."/>
            <person name="Moffat K.S."/>
            <person name="Cronin L.A."/>
            <person name="Shen M."/>
            <person name="Pai G."/>
            <person name="Van Aken S."/>
            <person name="Umayam L."/>
            <person name="Tallon L.J."/>
            <person name="Gill J.E."/>
            <person name="Adams M.D."/>
            <person name="Carrera A.J."/>
            <person name="Creasy T.H."/>
            <person name="Goodman H.M."/>
            <person name="Somerville C.R."/>
            <person name="Copenhaver G.P."/>
            <person name="Preuss D."/>
            <person name="Nierman W.C."/>
            <person name="White O."/>
            <person name="Eisen J.A."/>
            <person name="Salzberg S.L."/>
            <person name="Fraser C.M."/>
            <person name="Venter J.C."/>
        </authorList>
    </citation>
    <scope>NUCLEOTIDE SEQUENCE [LARGE SCALE GENOMIC DNA]</scope>
    <source>
        <strain>cv. Columbia</strain>
    </source>
</reference>
<reference key="2">
    <citation type="journal article" date="2017" name="Plant J.">
        <title>Araport11: a complete reannotation of the Arabidopsis thaliana reference genome.</title>
        <authorList>
            <person name="Cheng C.Y."/>
            <person name="Krishnakumar V."/>
            <person name="Chan A.P."/>
            <person name="Thibaud-Nissen F."/>
            <person name="Schobel S."/>
            <person name="Town C.D."/>
        </authorList>
    </citation>
    <scope>GENOME REANNOTATION</scope>
    <source>
        <strain>cv. Columbia</strain>
    </source>
</reference>
<reference key="3">
    <citation type="journal article" date="2003" name="Science">
        <title>Empirical analysis of transcriptional activity in the Arabidopsis genome.</title>
        <authorList>
            <person name="Yamada K."/>
            <person name="Lim J."/>
            <person name="Dale J.M."/>
            <person name="Chen H."/>
            <person name="Shinn P."/>
            <person name="Palm C.J."/>
            <person name="Southwick A.M."/>
            <person name="Wu H.C."/>
            <person name="Kim C.J."/>
            <person name="Nguyen M."/>
            <person name="Pham P.K."/>
            <person name="Cheuk R.F."/>
            <person name="Karlin-Newmann G."/>
            <person name="Liu S.X."/>
            <person name="Lam B."/>
            <person name="Sakano H."/>
            <person name="Wu T."/>
            <person name="Yu G."/>
            <person name="Miranda M."/>
            <person name="Quach H.L."/>
            <person name="Tripp M."/>
            <person name="Chang C.H."/>
            <person name="Lee J.M."/>
            <person name="Toriumi M.J."/>
            <person name="Chan M.M."/>
            <person name="Tang C.C."/>
            <person name="Onodera C.S."/>
            <person name="Deng J.M."/>
            <person name="Akiyama K."/>
            <person name="Ansari Y."/>
            <person name="Arakawa T."/>
            <person name="Banh J."/>
            <person name="Banno F."/>
            <person name="Bowser L."/>
            <person name="Brooks S.Y."/>
            <person name="Carninci P."/>
            <person name="Chao Q."/>
            <person name="Choy N."/>
            <person name="Enju A."/>
            <person name="Goldsmith A.D."/>
            <person name="Gurjal M."/>
            <person name="Hansen N.F."/>
            <person name="Hayashizaki Y."/>
            <person name="Johnson-Hopson C."/>
            <person name="Hsuan V.W."/>
            <person name="Iida K."/>
            <person name="Karnes M."/>
            <person name="Khan S."/>
            <person name="Koesema E."/>
            <person name="Ishida J."/>
            <person name="Jiang P.X."/>
            <person name="Jones T."/>
            <person name="Kawai J."/>
            <person name="Kamiya A."/>
            <person name="Meyers C."/>
            <person name="Nakajima M."/>
            <person name="Narusaka M."/>
            <person name="Seki M."/>
            <person name="Sakurai T."/>
            <person name="Satou M."/>
            <person name="Tamse R."/>
            <person name="Vaysberg M."/>
            <person name="Wallender E.K."/>
            <person name="Wong C."/>
            <person name="Yamamura Y."/>
            <person name="Yuan S."/>
            <person name="Shinozaki K."/>
            <person name="Davis R.W."/>
            <person name="Theologis A."/>
            <person name="Ecker J.R."/>
        </authorList>
    </citation>
    <scope>NUCLEOTIDE SEQUENCE [LARGE SCALE MRNA]</scope>
    <source>
        <strain>cv. Columbia</strain>
    </source>
</reference>
<reference key="4">
    <citation type="submission" date="2006-07" db="EMBL/GenBank/DDBJ databases">
        <title>Large-scale analysis of RIKEN Arabidopsis full-length (RAFL) cDNAs.</title>
        <authorList>
            <person name="Totoki Y."/>
            <person name="Seki M."/>
            <person name="Ishida J."/>
            <person name="Nakajima M."/>
            <person name="Enju A."/>
            <person name="Kamiya A."/>
            <person name="Narusaka M."/>
            <person name="Shin-i T."/>
            <person name="Nakagawa M."/>
            <person name="Sakamoto N."/>
            <person name="Oishi K."/>
            <person name="Kohara Y."/>
            <person name="Kobayashi M."/>
            <person name="Toyoda A."/>
            <person name="Sakaki Y."/>
            <person name="Sakurai T."/>
            <person name="Iida K."/>
            <person name="Akiyama K."/>
            <person name="Satou M."/>
            <person name="Toyoda T."/>
            <person name="Konagaya A."/>
            <person name="Carninci P."/>
            <person name="Kawai J."/>
            <person name="Hayashizaki Y."/>
            <person name="Shinozaki K."/>
        </authorList>
    </citation>
    <scope>NUCLEOTIDE SEQUENCE [LARGE SCALE MRNA] OF 471-796</scope>
    <source>
        <strain>cv. Columbia</strain>
    </source>
</reference>
<reference key="5">
    <citation type="journal article" date="2001" name="Plant Physiol.">
        <title>Chloroplast and mitochondrial proteases in Arabidopsis. A proposed nomenclature.</title>
        <authorList>
            <person name="Adam Z."/>
            <person name="Adamska I."/>
            <person name="Nakabayashi K."/>
            <person name="Ostersetzer O."/>
            <person name="Haussuhl K."/>
            <person name="Manuell A."/>
            <person name="Zheng B."/>
            <person name="Vallon O."/>
            <person name="Rodermel S.R."/>
            <person name="Shinozaki K."/>
            <person name="Clarke A.K."/>
        </authorList>
    </citation>
    <scope>GENE FAMILY</scope>
    <scope>NOMENCLATURE</scope>
</reference>
<reference key="6">
    <citation type="journal article" date="2003" name="Plant Cell">
        <title>Coordinated regulation and complex formation of yellow variegated1 and yellow variegated2, chloroplastic FtsH metalloproteases involved in the repair cycle of photosystem II in Arabidopsis thylakoid membranes.</title>
        <authorList>
            <person name="Sakamoto W."/>
            <person name="Zaltsman A."/>
            <person name="Adam Z."/>
            <person name="Takahashi Y."/>
        </authorList>
    </citation>
    <scope>SUBCELLULAR LOCATION</scope>
</reference>
<reference key="7">
    <citation type="journal article" date="2004" name="Plant Cell">
        <title>Experimental analysis of the Arabidopsis mitochondrial proteome highlights signaling and regulatory components, provides assessment of targeting prediction programs, and indicates plant-specific mitochondrial proteins.</title>
        <authorList>
            <person name="Heazlewood J.L."/>
            <person name="Tonti-Filippini J.S."/>
            <person name="Gout A.M."/>
            <person name="Day D.A."/>
            <person name="Whelan J."/>
            <person name="Millar A.H."/>
        </authorList>
    </citation>
    <scope>IDENTIFICATION BY MASS SPECTROMETRY</scope>
    <scope>SUBCELLULAR LOCATION [LARGE SCALE ANALYSIS]</scope>
    <source>
        <strain>cv. Landsberg erecta</strain>
    </source>
</reference>
<reference key="8">
    <citation type="journal article" date="2004" name="Plant J.">
        <title>The Arabidopsis FtsH metalloprotease gene family: interchangeability of subunits in chloroplast oligomeric complexes.</title>
        <authorList>
            <person name="Yu F."/>
            <person name="Park S."/>
            <person name="Rodermel S.R."/>
        </authorList>
    </citation>
    <scope>GENE FAMILY</scope>
    <scope>NOMENCLATURE</scope>
</reference>
<reference key="9">
    <citation type="journal article" date="2004" name="Plant Physiol.">
        <title>Expression in multigene families. Analysis of chloroplast and mitochondrial proteases.</title>
        <authorList>
            <person name="Sinvany-Villalobo G."/>
            <person name="Davydov O."/>
            <person name="Ben-Ari G."/>
            <person name="Zaltsman A."/>
            <person name="Raskind A."/>
            <person name="Adam Z."/>
        </authorList>
    </citation>
    <scope>INDUCTION BY HEAT AND HIGH LIGHT</scope>
</reference>
<reference key="10">
    <citation type="journal article" date="2007" name="Physiol. Plantarum">
        <title>The significance of Arabidopsis AAA proteases for activity and assembly/stability of mitochondrial OXPHOS complexes.</title>
        <authorList>
            <person name="Kolodziejczak M."/>
            <person name="Gibala M."/>
            <person name="Urantowka A."/>
            <person name="Janska H."/>
        </authorList>
    </citation>
    <scope>FUNCTION</scope>
    <scope>SUBCELLULAR LOCATION</scope>
</reference>
<keyword id="KW-0067">ATP-binding</keyword>
<keyword id="KW-0378">Hydrolase</keyword>
<keyword id="KW-0472">Membrane</keyword>
<keyword id="KW-0479">Metal-binding</keyword>
<keyword id="KW-0482">Metalloprotease</keyword>
<keyword id="KW-0496">Mitochondrion</keyword>
<keyword id="KW-0999">Mitochondrion inner membrane</keyword>
<keyword id="KW-0547">Nucleotide-binding</keyword>
<keyword id="KW-0645">Protease</keyword>
<keyword id="KW-1185">Reference proteome</keyword>
<keyword id="KW-0809">Transit peptide</keyword>
<keyword id="KW-0812">Transmembrane</keyword>
<keyword id="KW-1133">Transmembrane helix</keyword>
<keyword id="KW-0862">Zinc</keyword>
<organism>
    <name type="scientific">Arabidopsis thaliana</name>
    <name type="common">Mouse-ear cress</name>
    <dbReference type="NCBI Taxonomy" id="3702"/>
    <lineage>
        <taxon>Eukaryota</taxon>
        <taxon>Viridiplantae</taxon>
        <taxon>Streptophyta</taxon>
        <taxon>Embryophyta</taxon>
        <taxon>Tracheophyta</taxon>
        <taxon>Spermatophyta</taxon>
        <taxon>Magnoliopsida</taxon>
        <taxon>eudicotyledons</taxon>
        <taxon>Gunneridae</taxon>
        <taxon>Pentapetalae</taxon>
        <taxon>rosids</taxon>
        <taxon>malvids</taxon>
        <taxon>Brassicales</taxon>
        <taxon>Brassicaceae</taxon>
        <taxon>Camelineae</taxon>
        <taxon>Arabidopsis</taxon>
    </lineage>
</organism>